<comment type="function">
    <text evidence="3 5">Catalyzes the conversion of prostaglandin H2 (PGH2) to thromboxane A2 (TXA2), a potent inducer of blood vessel constriction and platelet aggregation (PubMed:3745158). Also cleaves PGH2 to 12-hydroxy-heptadecatrienoicacid (12-HHT) and malondialdehyde, which is known to act as a mediator of DNA damage. 12-HHT and malondialdehyde are formed stoichiometrically in the same amounts as TXA2. Additionally, displays dehydratase activity, toward (15S)-hydroperoxy-(5Z,8Z,11Z,13E)-eicosatetraenoate (15(S)-HPETE) producing 15-KETE and 15-HETE (By similarity).</text>
</comment>
<comment type="catalytic activity">
    <reaction evidence="5">
        <text>prostaglandin H2 = thromboxane A2</text>
        <dbReference type="Rhea" id="RHEA:17137"/>
        <dbReference type="ChEBI" id="CHEBI:57405"/>
        <dbReference type="ChEBI" id="CHEBI:57445"/>
        <dbReference type="EC" id="5.3.99.5"/>
    </reaction>
    <physiologicalReaction direction="left-to-right" evidence="3">
        <dbReference type="Rhea" id="RHEA:17138"/>
    </physiologicalReaction>
</comment>
<comment type="catalytic activity">
    <reaction evidence="3">
        <text>prostaglandin H2 = (12S)-hydroxy-(5Z,8E,10E)-heptadecatrienoate + malonaldehyde</text>
        <dbReference type="Rhea" id="RHEA:48644"/>
        <dbReference type="ChEBI" id="CHEBI:57405"/>
        <dbReference type="ChEBI" id="CHEBI:90694"/>
        <dbReference type="ChEBI" id="CHEBI:566274"/>
    </reaction>
</comment>
<comment type="catalytic activity">
    <reaction evidence="3">
        <text>a hydroperoxyeicosatetraenoate = an oxoeicosatetraenoate + H2O</text>
        <dbReference type="Rhea" id="RHEA:55556"/>
        <dbReference type="ChEBI" id="CHEBI:15377"/>
        <dbReference type="ChEBI" id="CHEBI:59720"/>
        <dbReference type="ChEBI" id="CHEBI:131859"/>
        <dbReference type="EC" id="4.2.1.152"/>
    </reaction>
    <physiologicalReaction direction="left-to-right" evidence="3">
        <dbReference type="Rhea" id="RHEA:55557"/>
    </physiologicalReaction>
</comment>
<comment type="catalytic activity">
    <reaction evidence="3">
        <text>(15S)-hydroperoxy-(5Z,8Z,11Z,13E)-eicosatetraenoate = 15-oxo-(5Z,8Z,11Z,13E)-eicosatetraenoate + H2O</text>
        <dbReference type="Rhea" id="RHEA:48636"/>
        <dbReference type="ChEBI" id="CHEBI:15377"/>
        <dbReference type="ChEBI" id="CHEBI:57410"/>
        <dbReference type="ChEBI" id="CHEBI:57446"/>
    </reaction>
    <physiologicalReaction direction="left-to-right" evidence="3">
        <dbReference type="Rhea" id="RHEA:48637"/>
    </physiologicalReaction>
</comment>
<comment type="catalytic activity">
    <reaction evidence="3">
        <text>(15S)-hydroperoxy-(5Z,8Z,11Z,13E)-eicosatetraenoate + AH2 = (15S)-hydroxy-(5Z,8Z,11Z,13E)-eicosatetraenoate + A + H2O</text>
        <dbReference type="Rhea" id="RHEA:48856"/>
        <dbReference type="ChEBI" id="CHEBI:13193"/>
        <dbReference type="ChEBI" id="CHEBI:15377"/>
        <dbReference type="ChEBI" id="CHEBI:17499"/>
        <dbReference type="ChEBI" id="CHEBI:57409"/>
        <dbReference type="ChEBI" id="CHEBI:57446"/>
    </reaction>
    <physiologicalReaction direction="left-to-right" evidence="3">
        <dbReference type="Rhea" id="RHEA:48857"/>
    </physiologicalReaction>
</comment>
<comment type="cofactor">
    <cofactor evidence="3">
        <name>heme</name>
        <dbReference type="ChEBI" id="CHEBI:30413"/>
    </cofactor>
</comment>
<comment type="biophysicochemical properties">
    <kinetics>
        <KM evidence="5">12 uM for prostaglandin H2</KM>
        <Vmax evidence="5">0.23 umol/min/mg enzyme for prostaglandin H2 as substrate</Vmax>
    </kinetics>
</comment>
<comment type="subunit">
    <text evidence="3">Monomer.</text>
</comment>
<comment type="subcellular location">
    <subcellularLocation>
        <location evidence="3">Endoplasmic reticulum membrane</location>
        <topology evidence="1">Multi-pass membrane protein</topology>
    </subcellularLocation>
</comment>
<comment type="tissue specificity">
    <text evidence="6">Expressed in lung, kidney and thymus.</text>
</comment>
<comment type="similarity">
    <text evidence="7">Belongs to the cytochrome P450 family.</text>
</comment>
<gene>
    <name type="primary">TBXAS1</name>
    <name type="synonym">CYP5</name>
    <name type="synonym">CYP5A1</name>
</gene>
<dbReference type="EC" id="5.3.99.5" evidence="5"/>
<dbReference type="EC" id="4.2.1.152"/>
<dbReference type="EMBL" id="L13128">
    <property type="protein sequence ID" value="AAA31127.1"/>
    <property type="molecule type" value="mRNA"/>
</dbReference>
<dbReference type="RefSeq" id="NP_999211.1">
    <property type="nucleotide sequence ID" value="NM_214046.1"/>
</dbReference>
<dbReference type="SMR" id="P47787"/>
<dbReference type="BioGRID" id="1149247">
    <property type="interactions" value="1"/>
</dbReference>
<dbReference type="FunCoup" id="P47787">
    <property type="interactions" value="135"/>
</dbReference>
<dbReference type="STRING" id="9823.ENSSSCP00000017486"/>
<dbReference type="PaxDb" id="9823-ENSSSCP00000017486"/>
<dbReference type="PeptideAtlas" id="P47787"/>
<dbReference type="Ensembl" id="ENSSSCT00070044468.1">
    <property type="protein sequence ID" value="ENSSSCP00070037469.1"/>
    <property type="gene ID" value="ENSSSCG00070022371.1"/>
</dbReference>
<dbReference type="Ensembl" id="ENSSSCT00090005175">
    <property type="protein sequence ID" value="ENSSSCP00090003240"/>
    <property type="gene ID" value="ENSSSCG00090002976"/>
</dbReference>
<dbReference type="Ensembl" id="ENSSSCT00105022930">
    <property type="protein sequence ID" value="ENSSSCP00105016479"/>
    <property type="gene ID" value="ENSSSCG00105011464"/>
</dbReference>
<dbReference type="Ensembl" id="ENSSSCT00115032836">
    <property type="protein sequence ID" value="ENSSSCP00115031196"/>
    <property type="gene ID" value="ENSSSCG00115018544"/>
</dbReference>
<dbReference type="Ensembl" id="ENSSSCT00130000984">
    <property type="protein sequence ID" value="ENSSSCP00130000696"/>
    <property type="gene ID" value="ENSSSCG00130000549"/>
</dbReference>
<dbReference type="GeneID" id="397112"/>
<dbReference type="KEGG" id="ssc:397112"/>
<dbReference type="CTD" id="6916"/>
<dbReference type="eggNOG" id="KOG0158">
    <property type="taxonomic scope" value="Eukaryota"/>
</dbReference>
<dbReference type="InParanoid" id="P47787"/>
<dbReference type="OMA" id="WPHPETF"/>
<dbReference type="OrthoDB" id="1470350at2759"/>
<dbReference type="Reactome" id="R-SSC-211979">
    <property type="pathway name" value="Eicosanoids"/>
</dbReference>
<dbReference type="Reactome" id="R-SSC-2162123">
    <property type="pathway name" value="Synthesis of Prostaglandins (PG) and Thromboxanes (TX)"/>
</dbReference>
<dbReference type="Proteomes" id="UP000008227">
    <property type="component" value="Unplaced"/>
</dbReference>
<dbReference type="Proteomes" id="UP000314985">
    <property type="component" value="Chromosome 18"/>
</dbReference>
<dbReference type="Proteomes" id="UP000694570">
    <property type="component" value="Unplaced"/>
</dbReference>
<dbReference type="Proteomes" id="UP000694571">
    <property type="component" value="Unplaced"/>
</dbReference>
<dbReference type="Proteomes" id="UP000694720">
    <property type="component" value="Unplaced"/>
</dbReference>
<dbReference type="Proteomes" id="UP000694722">
    <property type="component" value="Unplaced"/>
</dbReference>
<dbReference type="Proteomes" id="UP000694723">
    <property type="component" value="Unplaced"/>
</dbReference>
<dbReference type="Proteomes" id="UP000694724">
    <property type="component" value="Unplaced"/>
</dbReference>
<dbReference type="Proteomes" id="UP000694725">
    <property type="component" value="Unplaced"/>
</dbReference>
<dbReference type="Proteomes" id="UP000694726">
    <property type="component" value="Unplaced"/>
</dbReference>
<dbReference type="Proteomes" id="UP000694727">
    <property type="component" value="Unplaced"/>
</dbReference>
<dbReference type="Proteomes" id="UP000694728">
    <property type="component" value="Unplaced"/>
</dbReference>
<dbReference type="GO" id="GO:0005789">
    <property type="term" value="C:endoplasmic reticulum membrane"/>
    <property type="evidence" value="ECO:0000250"/>
    <property type="project" value="UniProtKB"/>
</dbReference>
<dbReference type="GO" id="GO:0036134">
    <property type="term" value="F:12-hydroxyheptadecatrienoic acid synthase activity"/>
    <property type="evidence" value="ECO:0007669"/>
    <property type="project" value="RHEA"/>
</dbReference>
<dbReference type="GO" id="GO:0020037">
    <property type="term" value="F:heme binding"/>
    <property type="evidence" value="ECO:0000250"/>
    <property type="project" value="UniProtKB"/>
</dbReference>
<dbReference type="GO" id="GO:0106256">
    <property type="term" value="F:hydroperoxy icosatetraenoate dehydratase activity"/>
    <property type="evidence" value="ECO:0000250"/>
    <property type="project" value="UniProtKB"/>
</dbReference>
<dbReference type="GO" id="GO:0005506">
    <property type="term" value="F:iron ion binding"/>
    <property type="evidence" value="ECO:0007669"/>
    <property type="project" value="InterPro"/>
</dbReference>
<dbReference type="GO" id="GO:0004497">
    <property type="term" value="F:monooxygenase activity"/>
    <property type="evidence" value="ECO:0007669"/>
    <property type="project" value="UniProtKB-KW"/>
</dbReference>
<dbReference type="GO" id="GO:0016705">
    <property type="term" value="F:oxidoreductase activity, acting on paired donors, with incorporation or reduction of molecular oxygen"/>
    <property type="evidence" value="ECO:0007669"/>
    <property type="project" value="InterPro"/>
</dbReference>
<dbReference type="GO" id="GO:0004796">
    <property type="term" value="F:thromboxane-A synthase activity"/>
    <property type="evidence" value="ECO:0000318"/>
    <property type="project" value="GO_Central"/>
</dbReference>
<dbReference type="GO" id="GO:0006690">
    <property type="term" value="P:icosanoid metabolic process"/>
    <property type="evidence" value="ECO:0000250"/>
    <property type="project" value="UniProtKB"/>
</dbReference>
<dbReference type="GO" id="GO:0001516">
    <property type="term" value="P:prostaglandin biosynthetic process"/>
    <property type="evidence" value="ECO:0000250"/>
    <property type="project" value="UniProtKB"/>
</dbReference>
<dbReference type="FunFam" id="1.10.630.10:FF:000003">
    <property type="entry name" value="cytochrome P450 3A12-like isoform X2"/>
    <property type="match status" value="1"/>
</dbReference>
<dbReference type="Gene3D" id="1.10.630.10">
    <property type="entry name" value="Cytochrome P450"/>
    <property type="match status" value="1"/>
</dbReference>
<dbReference type="InterPro" id="IPR001128">
    <property type="entry name" value="Cyt_P450"/>
</dbReference>
<dbReference type="InterPro" id="IPR017972">
    <property type="entry name" value="Cyt_P450_CS"/>
</dbReference>
<dbReference type="InterPro" id="IPR002401">
    <property type="entry name" value="Cyt_P450_E_grp-I"/>
</dbReference>
<dbReference type="InterPro" id="IPR036396">
    <property type="entry name" value="Cyt_P450_sf"/>
</dbReference>
<dbReference type="InterPro" id="IPR050705">
    <property type="entry name" value="Cytochrome_P450_3A"/>
</dbReference>
<dbReference type="PANTHER" id="PTHR24302:SF47">
    <property type="entry name" value="CYTOCHROME P450"/>
    <property type="match status" value="1"/>
</dbReference>
<dbReference type="PANTHER" id="PTHR24302">
    <property type="entry name" value="CYTOCHROME P450 FAMILY 3"/>
    <property type="match status" value="1"/>
</dbReference>
<dbReference type="Pfam" id="PF00067">
    <property type="entry name" value="p450"/>
    <property type="match status" value="2"/>
</dbReference>
<dbReference type="PRINTS" id="PR00463">
    <property type="entry name" value="EP450I"/>
</dbReference>
<dbReference type="PRINTS" id="PR00385">
    <property type="entry name" value="P450"/>
</dbReference>
<dbReference type="SUPFAM" id="SSF48264">
    <property type="entry name" value="Cytochrome P450"/>
    <property type="match status" value="1"/>
</dbReference>
<dbReference type="PROSITE" id="PS00086">
    <property type="entry name" value="CYTOCHROME_P450"/>
    <property type="match status" value="1"/>
</dbReference>
<proteinExistence type="evidence at protein level"/>
<sequence>MEVLGFLSPELNGPMVTMALAVVLLALLKWYSTSAFSRLEKLGIRHPKPSPFIGNLTFFRQGFWESHMELRKQYGPLSGYYLGRRMIVVISDPDMIKQVLAEKFSNFTNRMATGLESKPVADSILFLRDKRWEEVRSVLTSAFSPKKLNKLTPLISQACDLLLAHLERYAESGDAFDIQRCYCCYTTDVVASVAFGTQVNSSEEPEHPFVKHCRRFFAFSVPRLILVLILSFPSIMVPLARILPNKKRDEVNGFFNKLIRNVIALRDQQAAEERRQDFLQMVLDLRHSAPSVGVENFDIVRQAFSSAKGCPADPSQPHLPRPLSKPLTVDEVVGQAFLFLIAGYEIITNTLSFVTYLLATNPDCQEKLLREVDDFSKKHPSPEHCSLQQGLPYLDMVLSETLRMYPPAFRFTREAARDCEVLGQRIPAGTVLEVAVGALHHDPKHWPHPETFDPERFTAEAQRLQQPFTYLPFGAGPRSCLGVQLGLLEIKLTLLHILRKFRFEACPETQVPLQLESKSALSPKNGVYIRIVPR</sequence>
<feature type="chain" id="PRO_0000052258" description="Thromboxane-A synthase">
    <location>
        <begin position="1"/>
        <end position="534"/>
    </location>
</feature>
<feature type="topological domain" description="Cytoplasmic" evidence="3">
    <location>
        <begin position="1"/>
        <end position="10"/>
    </location>
</feature>
<feature type="transmembrane region" description="Helical" evidence="4">
    <location>
        <begin position="11"/>
        <end position="31"/>
    </location>
</feature>
<feature type="topological domain" description="Lumenal" evidence="3">
    <location>
        <begin position="32"/>
        <end position="75"/>
    </location>
</feature>
<feature type="transmembrane region" description="Helical" evidence="4">
    <location>
        <begin position="76"/>
        <end position="96"/>
    </location>
</feature>
<feature type="topological domain" description="Cytoplasmic" evidence="3">
    <location>
        <begin position="97"/>
        <end position="223"/>
    </location>
</feature>
<feature type="transmembrane region" description="Helical" evidence="4">
    <location>
        <begin position="224"/>
        <end position="244"/>
    </location>
</feature>
<feature type="topological domain" description="Lumenal" evidence="3">
    <location>
        <begin position="245"/>
        <end position="336"/>
    </location>
</feature>
<feature type="transmembrane region" description="Helical" evidence="4">
    <location>
        <begin position="337"/>
        <end position="357"/>
    </location>
</feature>
<feature type="topological domain" description="Cytoplasmic" evidence="3">
    <location>
        <begin position="358"/>
        <end position="534"/>
    </location>
</feature>
<feature type="binding site" description="axial binding residue" evidence="2">
    <location>
        <position position="480"/>
    </location>
    <ligand>
        <name>heme</name>
        <dbReference type="ChEBI" id="CHEBI:30413"/>
    </ligand>
    <ligandPart>
        <name>Fe</name>
        <dbReference type="ChEBI" id="CHEBI:18248"/>
    </ligandPart>
</feature>
<evidence type="ECO:0000250" key="1"/>
<evidence type="ECO:0000250" key="2">
    <source>
        <dbReference type="UniProtKB" id="P14779"/>
    </source>
</evidence>
<evidence type="ECO:0000250" key="3">
    <source>
        <dbReference type="UniProtKB" id="P24557"/>
    </source>
</evidence>
<evidence type="ECO:0000255" key="4"/>
<evidence type="ECO:0000269" key="5">
    <source>
    </source>
</evidence>
<evidence type="ECO:0000269" key="6">
    <source>
    </source>
</evidence>
<evidence type="ECO:0000305" key="7"/>
<keyword id="KW-0256">Endoplasmic reticulum</keyword>
<keyword id="KW-0275">Fatty acid biosynthesis</keyword>
<keyword id="KW-0276">Fatty acid metabolism</keyword>
<keyword id="KW-0349">Heme</keyword>
<keyword id="KW-0408">Iron</keyword>
<keyword id="KW-0413">Isomerase</keyword>
<keyword id="KW-0444">Lipid biosynthesis</keyword>
<keyword id="KW-0443">Lipid metabolism</keyword>
<keyword id="KW-0456">Lyase</keyword>
<keyword id="KW-0472">Membrane</keyword>
<keyword id="KW-0479">Metal-binding</keyword>
<keyword id="KW-0503">Monooxygenase</keyword>
<keyword id="KW-0560">Oxidoreductase</keyword>
<keyword id="KW-0643">Prostaglandin biosynthesis</keyword>
<keyword id="KW-0644">Prostaglandin metabolism</keyword>
<keyword id="KW-1185">Reference proteome</keyword>
<keyword id="KW-0812">Transmembrane</keyword>
<keyword id="KW-1133">Transmembrane helix</keyword>
<accession>P47787</accession>
<reference key="1">
    <citation type="journal article" date="1994" name="Gene">
        <title>The porcine thromboxane synthase-encoding cDNA: sequence, mRNA expression and enzyme production in Sf9 insect cells.</title>
        <authorList>
            <person name="Shen R.F."/>
            <person name="Zhang L."/>
            <person name="Baek S.J."/>
            <person name="Tai H.H."/>
            <person name="Lee K.D."/>
        </authorList>
    </citation>
    <scope>NUCLEOTIDE SEQUENCE [MRNA]</scope>
    <scope>TISSUE SPECIFICITY</scope>
    <source>
        <tissue>Lung</tissue>
    </source>
</reference>
<reference key="2">
    <citation type="journal article" date="1986" name="J. Biol. Chem.">
        <title>Immunoaffinity purification and characterization of thromboxane synthase from porcine lung.</title>
        <authorList>
            <person name="Shen R.F."/>
            <person name="Tai H.H."/>
        </authorList>
    </citation>
    <scope>CATALYTIC ACTIVITY</scope>
    <scope>FUNCTION</scope>
    <scope>BIOPHYSICOCHEMICAL PROPERTIES</scope>
</reference>
<organism>
    <name type="scientific">Sus scrofa</name>
    <name type="common">Pig</name>
    <dbReference type="NCBI Taxonomy" id="9823"/>
    <lineage>
        <taxon>Eukaryota</taxon>
        <taxon>Metazoa</taxon>
        <taxon>Chordata</taxon>
        <taxon>Craniata</taxon>
        <taxon>Vertebrata</taxon>
        <taxon>Euteleostomi</taxon>
        <taxon>Mammalia</taxon>
        <taxon>Eutheria</taxon>
        <taxon>Laurasiatheria</taxon>
        <taxon>Artiodactyla</taxon>
        <taxon>Suina</taxon>
        <taxon>Suidae</taxon>
        <taxon>Sus</taxon>
    </lineage>
</organism>
<protein>
    <recommendedName>
        <fullName>Thromboxane-A synthase</fullName>
        <shortName>TXA synthase</shortName>
        <shortName>TXS</shortName>
        <ecNumber evidence="5">5.3.99.5</ecNumber>
    </recommendedName>
    <alternativeName>
        <fullName>Cytochrome P450 5A1</fullName>
    </alternativeName>
    <alternativeName>
        <fullName>Hydroperoxy icosatetraenoate dehydratase</fullName>
        <ecNumber>4.2.1.152</ecNumber>
    </alternativeName>
</protein>
<name>THAS_PIG</name>